<reference key="1">
    <citation type="journal article" date="2010" name="J. Bacteriol.">
        <title>Genome sequence of the deep-rooted Yersinia pestis strain Angola reveals new insights into the evolution and pangenome of the plague bacterium.</title>
        <authorList>
            <person name="Eppinger M."/>
            <person name="Worsham P.L."/>
            <person name="Nikolich M.P."/>
            <person name="Riley D.R."/>
            <person name="Sebastian Y."/>
            <person name="Mou S."/>
            <person name="Achtman M."/>
            <person name="Lindler L.E."/>
            <person name="Ravel J."/>
        </authorList>
    </citation>
    <scope>NUCLEOTIDE SEQUENCE [LARGE SCALE GENOMIC DNA]</scope>
    <source>
        <strain>Angola</strain>
    </source>
</reference>
<feature type="chain" id="PRO_1000145687" description="Multidrug resistance protein MdtC">
    <location>
        <begin position="1"/>
        <end position="1024"/>
    </location>
</feature>
<feature type="transmembrane region" description="Helical" evidence="1">
    <location>
        <begin position="12"/>
        <end position="32"/>
    </location>
</feature>
<feature type="transmembrane region" description="Helical" evidence="1">
    <location>
        <begin position="333"/>
        <end position="353"/>
    </location>
</feature>
<feature type="transmembrane region" description="Helical" evidence="1">
    <location>
        <begin position="360"/>
        <end position="380"/>
    </location>
</feature>
<feature type="transmembrane region" description="Helical" evidence="1">
    <location>
        <begin position="387"/>
        <end position="407"/>
    </location>
</feature>
<feature type="transmembrane region" description="Helical" evidence="1">
    <location>
        <begin position="435"/>
        <end position="455"/>
    </location>
</feature>
<feature type="transmembrane region" description="Helical" evidence="1">
    <location>
        <begin position="469"/>
        <end position="489"/>
    </location>
</feature>
<feature type="transmembrane region" description="Helical" evidence="1">
    <location>
        <begin position="528"/>
        <end position="548"/>
    </location>
</feature>
<feature type="transmembrane region" description="Helical" evidence="1">
    <location>
        <begin position="853"/>
        <end position="873"/>
    </location>
</feature>
<feature type="transmembrane region" description="Helical" evidence="1">
    <location>
        <begin position="875"/>
        <end position="895"/>
    </location>
</feature>
<feature type="transmembrane region" description="Helical" evidence="1">
    <location>
        <begin position="897"/>
        <end position="917"/>
    </location>
</feature>
<feature type="transmembrane region" description="Helical" evidence="1">
    <location>
        <begin position="953"/>
        <end position="973"/>
    </location>
</feature>
<feature type="transmembrane region" description="Helical" evidence="1">
    <location>
        <begin position="984"/>
        <end position="1004"/>
    </location>
</feature>
<proteinExistence type="inferred from homology"/>
<gene>
    <name evidence="1" type="primary">mdtC</name>
    <name type="ordered locus">YpAngola_A3101</name>
</gene>
<evidence type="ECO:0000255" key="1">
    <source>
        <dbReference type="HAMAP-Rule" id="MF_01424"/>
    </source>
</evidence>
<keyword id="KW-0997">Cell inner membrane</keyword>
<keyword id="KW-1003">Cell membrane</keyword>
<keyword id="KW-0472">Membrane</keyword>
<keyword id="KW-0812">Transmembrane</keyword>
<keyword id="KW-1133">Transmembrane helix</keyword>
<keyword id="KW-0813">Transport</keyword>
<accession>A9QZU8</accession>
<dbReference type="EMBL" id="CP000901">
    <property type="protein sequence ID" value="ABX87524.1"/>
    <property type="molecule type" value="Genomic_DNA"/>
</dbReference>
<dbReference type="RefSeq" id="WP_002209794.1">
    <property type="nucleotide sequence ID" value="NZ_CP009935.1"/>
</dbReference>
<dbReference type="SMR" id="A9QZU8"/>
<dbReference type="GeneID" id="57975807"/>
<dbReference type="KEGG" id="ypg:YpAngola_A3101"/>
<dbReference type="PATRIC" id="fig|349746.12.peg.4159"/>
<dbReference type="GO" id="GO:0005886">
    <property type="term" value="C:plasma membrane"/>
    <property type="evidence" value="ECO:0007669"/>
    <property type="project" value="UniProtKB-SubCell"/>
</dbReference>
<dbReference type="GO" id="GO:0042910">
    <property type="term" value="F:xenobiotic transmembrane transporter activity"/>
    <property type="evidence" value="ECO:0007669"/>
    <property type="project" value="TreeGrafter"/>
</dbReference>
<dbReference type="FunFam" id="1.20.1640.10:FF:000001">
    <property type="entry name" value="Efflux pump membrane transporter"/>
    <property type="match status" value="1"/>
</dbReference>
<dbReference type="FunFam" id="3.30.70.1430:FF:000001">
    <property type="entry name" value="Efflux pump membrane transporter"/>
    <property type="match status" value="1"/>
</dbReference>
<dbReference type="FunFam" id="3.30.2090.10:FF:000004">
    <property type="entry name" value="Multidrug resistance protein MdtC"/>
    <property type="match status" value="1"/>
</dbReference>
<dbReference type="Gene3D" id="3.30.70.1430">
    <property type="entry name" value="Multidrug efflux transporter AcrB pore domain"/>
    <property type="match status" value="2"/>
</dbReference>
<dbReference type="Gene3D" id="3.30.70.1440">
    <property type="entry name" value="Multidrug efflux transporter AcrB pore domain"/>
    <property type="match status" value="1"/>
</dbReference>
<dbReference type="Gene3D" id="3.30.70.1320">
    <property type="entry name" value="Multidrug efflux transporter AcrB pore domain like"/>
    <property type="match status" value="1"/>
</dbReference>
<dbReference type="Gene3D" id="3.30.2090.10">
    <property type="entry name" value="Multidrug efflux transporter AcrB TolC docking domain, DN and DC subdomains"/>
    <property type="match status" value="2"/>
</dbReference>
<dbReference type="Gene3D" id="1.20.1640.10">
    <property type="entry name" value="Multidrug efflux transporter AcrB transmembrane domain"/>
    <property type="match status" value="2"/>
</dbReference>
<dbReference type="HAMAP" id="MF_01424">
    <property type="entry name" value="MdtC"/>
    <property type="match status" value="1"/>
</dbReference>
<dbReference type="InterPro" id="IPR027463">
    <property type="entry name" value="AcrB_DN_DC_subdom"/>
</dbReference>
<dbReference type="InterPro" id="IPR001036">
    <property type="entry name" value="Acrflvin-R"/>
</dbReference>
<dbReference type="InterPro" id="IPR023931">
    <property type="entry name" value="Multidrug-R_MdtC"/>
</dbReference>
<dbReference type="NCBIfam" id="NF007905">
    <property type="entry name" value="PRK10614.1"/>
    <property type="match status" value="1"/>
</dbReference>
<dbReference type="NCBIfam" id="NF033617">
    <property type="entry name" value="RND_permease_2"/>
    <property type="match status" value="1"/>
</dbReference>
<dbReference type="PANTHER" id="PTHR32063">
    <property type="match status" value="1"/>
</dbReference>
<dbReference type="PANTHER" id="PTHR32063:SF34">
    <property type="entry name" value="MULTIDRUG RESISTANCE PROTEIN MDTC"/>
    <property type="match status" value="1"/>
</dbReference>
<dbReference type="Pfam" id="PF00873">
    <property type="entry name" value="ACR_tran"/>
    <property type="match status" value="1"/>
</dbReference>
<dbReference type="PRINTS" id="PR00702">
    <property type="entry name" value="ACRIFLAVINRP"/>
</dbReference>
<dbReference type="SUPFAM" id="SSF82693">
    <property type="entry name" value="Multidrug efflux transporter AcrB pore domain, PN1, PN2, PC1 and PC2 subdomains"/>
    <property type="match status" value="4"/>
</dbReference>
<dbReference type="SUPFAM" id="SSF82714">
    <property type="entry name" value="Multidrug efflux transporter AcrB TolC docking domain, DN and DC subdomains"/>
    <property type="match status" value="2"/>
</dbReference>
<dbReference type="SUPFAM" id="SSF82866">
    <property type="entry name" value="Multidrug efflux transporter AcrB transmembrane domain"/>
    <property type="match status" value="2"/>
</dbReference>
<comment type="subunit">
    <text evidence="1">Part of a tripartite efflux system composed of MdtA, MdtB and MdtC. MdtC forms a heteromultimer with MdtB.</text>
</comment>
<comment type="subcellular location">
    <subcellularLocation>
        <location evidence="1">Cell inner membrane</location>
        <topology evidence="1">Multi-pass membrane protein</topology>
    </subcellularLocation>
</comment>
<comment type="similarity">
    <text evidence="1">Belongs to the resistance-nodulation-cell division (RND) (TC 2.A.6) family. MdtC subfamily.</text>
</comment>
<protein>
    <recommendedName>
        <fullName evidence="1">Multidrug resistance protein MdtC</fullName>
    </recommendedName>
    <alternativeName>
        <fullName evidence="1">Multidrug transporter MdtC</fullName>
    </alternativeName>
</protein>
<organism>
    <name type="scientific">Yersinia pestis bv. Antiqua (strain Angola)</name>
    <dbReference type="NCBI Taxonomy" id="349746"/>
    <lineage>
        <taxon>Bacteria</taxon>
        <taxon>Pseudomonadati</taxon>
        <taxon>Pseudomonadota</taxon>
        <taxon>Gammaproteobacteria</taxon>
        <taxon>Enterobacterales</taxon>
        <taxon>Yersiniaceae</taxon>
        <taxon>Yersinia</taxon>
    </lineage>
</organism>
<name>MDTC_YERPG</name>
<sequence>MKFFALFIQRPVATTLLTLAITLSGIIGFSLLPVSPLPQVDYPVIMVSASMPGADPETMASSVATPLERALGRIAGVNEMTSTSSLGSTRIILQFDLNRDINGAARDVQAALNAAQSLLPSGMPSRPTYRKMNPSDAPIMIMTLTSDTFSQGQLYDYASTKLAQKIAQTEGVSDVTVGGSSLPAVRVELNPSALFNQGVSLDAVRQAISAANVRRPQGSVDAAETHWQVQANDEIKTAEGYRPLIVHYNNGSPVRLQDVANVIDSVQDVRNAGMSAGQPAVLLVISREPGANIIATVDRIRAELPALRASIPASIQLNIAQDRSPTIRASLDEVERSLVIAVALVILVVFIFLRSGRATLIPAVAVPVSLIGTFAAMYLCGFSLNNLSLMALTIATGFVVDDAIVVLENISRHLEAGVKPKVAALRGVREVGFTVLSMSISLVAVFIPLLLMAGLPGRLFREFAVTLSVAIGISLVISLTLTPMMCAWLLRSHPKGQQQRIRGFGKVLLAIQQGYGRSLNWALSHTRWVMVVLLSTIALNVWLYISIPKTFFPEQDTGRMMGFIQADQSISFQSMQQKLKDFMQIVGADPAVDSVTGFTGGSRTNSGSMFISLKPLSERQETAQQVITRLRGKLAKEPGANLFLSSVQDIRVGGRHSNAAYQFTLLADDLAALREWEPKVRAALAKLPQLADVNSDQQDKGAEMALTYDRETMARLGIDVSEANALLNNAFGQRQISTIYQPLNQYKVVMEVAPEYTQDVSSLDKMFVINSNGQSIPLSYFAKWQPANAPLAVNHQGLSAASTISFNLPDGGSLSEATAAVERAMTELGVPSTVRGAFAGTAQVFQETLKSQLWLIMAAIATVYIVLGILYESYVHPLTILSTLPSAGVGALLALELFDAPFSLIALIGIMLLIGIVKKNAIMMVDFALDAQRNGNISAREAIFQASLLRFRPIIMTTLAALFGALPLVLSSGDGAELRQPLGITIVGGLVVSQLLTLYTTPVIYLYFDRLRNRFSKQPLMKLE</sequence>